<comment type="function">
    <text evidence="1">Cell division factor that enhances FtsZ-ring assembly. Directly interacts with FtsZ and promotes bundling of FtsZ protofilaments, with a reduction in FtsZ GTPase activity.</text>
</comment>
<comment type="subunit">
    <text evidence="1">Interacts with FtsZ.</text>
</comment>
<comment type="subcellular location">
    <subcellularLocation>
        <location evidence="1">Cytoplasm</location>
    </subcellularLocation>
    <text evidence="1">Localizes to mid-cell in an FtsZ-dependent manner.</text>
</comment>
<comment type="similarity">
    <text evidence="1">Belongs to the ZapD family.</text>
</comment>
<proteinExistence type="inferred from homology"/>
<name>ZAPD_CUPNH</name>
<organism>
    <name type="scientific">Cupriavidus necator (strain ATCC 17699 / DSM 428 / KCTC 22496 / NCIMB 10442 / H16 / Stanier 337)</name>
    <name type="common">Ralstonia eutropha</name>
    <dbReference type="NCBI Taxonomy" id="381666"/>
    <lineage>
        <taxon>Bacteria</taxon>
        <taxon>Pseudomonadati</taxon>
        <taxon>Pseudomonadota</taxon>
        <taxon>Betaproteobacteria</taxon>
        <taxon>Burkholderiales</taxon>
        <taxon>Burkholderiaceae</taxon>
        <taxon>Cupriavidus</taxon>
    </lineage>
</organism>
<sequence length="252" mass="28890">MILYEYPFNERIRTLLRLEDLFDRLEYFLGQDHAHQHHVALTTLFEIIDVAGRADLKTDLIKELERQRQALAPLRANPQIDQEALDAVIGEIEQGIAMLNQTVGKAGQLLADNEWLTSIRSRAIIPGGTCEFDLPAYYAWQHRPAEDRRADILKWVRPLLSLRMGTTIVLRLLREAGQSGKVIATGGSYQQMLSGRSYQLMQVYLDDSLLAFIPEMSANKYMLWVRFTQQDGDLRPRSVDADIPFLLKLCNF</sequence>
<reference key="1">
    <citation type="journal article" date="2006" name="Nat. Biotechnol.">
        <title>Genome sequence of the bioplastic-producing 'Knallgas' bacterium Ralstonia eutropha H16.</title>
        <authorList>
            <person name="Pohlmann A."/>
            <person name="Fricke W.F."/>
            <person name="Reinecke F."/>
            <person name="Kusian B."/>
            <person name="Liesegang H."/>
            <person name="Cramm R."/>
            <person name="Eitinger T."/>
            <person name="Ewering C."/>
            <person name="Poetter M."/>
            <person name="Schwartz E."/>
            <person name="Strittmatter A."/>
            <person name="Voss I."/>
            <person name="Gottschalk G."/>
            <person name="Steinbuechel A."/>
            <person name="Friedrich B."/>
            <person name="Bowien B."/>
        </authorList>
    </citation>
    <scope>NUCLEOTIDE SEQUENCE [LARGE SCALE GENOMIC DNA]</scope>
    <source>
        <strain>ATCC 17699 / DSM 428 / KCTC 22496 / NCIMB 10442 / H16 / Stanier 337</strain>
    </source>
</reference>
<evidence type="ECO:0000255" key="1">
    <source>
        <dbReference type="HAMAP-Rule" id="MF_01092"/>
    </source>
</evidence>
<feature type="chain" id="PRO_1000064916" description="Cell division protein ZapD">
    <location>
        <begin position="1"/>
        <end position="252"/>
    </location>
</feature>
<dbReference type="EMBL" id="AM260479">
    <property type="protein sequence ID" value="CAJ94333.1"/>
    <property type="molecule type" value="Genomic_DNA"/>
</dbReference>
<dbReference type="RefSeq" id="WP_011616084.1">
    <property type="nucleotide sequence ID" value="NC_008313.1"/>
</dbReference>
<dbReference type="SMR" id="Q0K6N8"/>
<dbReference type="STRING" id="381666.H16_A3259"/>
<dbReference type="KEGG" id="reh:H16_A3259"/>
<dbReference type="PATRIC" id="fig|381666.6.peg.3651"/>
<dbReference type="eggNOG" id="COG4582">
    <property type="taxonomic scope" value="Bacteria"/>
</dbReference>
<dbReference type="HOGENOM" id="CLU_076303_0_1_4"/>
<dbReference type="OrthoDB" id="5294622at2"/>
<dbReference type="Proteomes" id="UP000008210">
    <property type="component" value="Chromosome 1"/>
</dbReference>
<dbReference type="GO" id="GO:0032153">
    <property type="term" value="C:cell division site"/>
    <property type="evidence" value="ECO:0007669"/>
    <property type="project" value="TreeGrafter"/>
</dbReference>
<dbReference type="GO" id="GO:0005737">
    <property type="term" value="C:cytoplasm"/>
    <property type="evidence" value="ECO:0007669"/>
    <property type="project" value="UniProtKB-SubCell"/>
</dbReference>
<dbReference type="GO" id="GO:0000917">
    <property type="term" value="P:division septum assembly"/>
    <property type="evidence" value="ECO:0007669"/>
    <property type="project" value="UniProtKB-KW"/>
</dbReference>
<dbReference type="GO" id="GO:0043093">
    <property type="term" value="P:FtsZ-dependent cytokinesis"/>
    <property type="evidence" value="ECO:0007669"/>
    <property type="project" value="UniProtKB-UniRule"/>
</dbReference>
<dbReference type="Gene3D" id="1.10.3900.10">
    <property type="entry name" value="YacF-like"/>
    <property type="match status" value="1"/>
</dbReference>
<dbReference type="Gene3D" id="2.60.440.10">
    <property type="entry name" value="YacF-like domains"/>
    <property type="match status" value="1"/>
</dbReference>
<dbReference type="HAMAP" id="MF_01092">
    <property type="entry name" value="ZapD"/>
    <property type="match status" value="1"/>
</dbReference>
<dbReference type="InterPro" id="IPR009777">
    <property type="entry name" value="ZapD"/>
</dbReference>
<dbReference type="InterPro" id="IPR027462">
    <property type="entry name" value="ZapD_C"/>
</dbReference>
<dbReference type="InterPro" id="IPR036268">
    <property type="entry name" value="ZapD_sf"/>
</dbReference>
<dbReference type="NCBIfam" id="NF003656">
    <property type="entry name" value="PRK05287.1-4"/>
    <property type="match status" value="1"/>
</dbReference>
<dbReference type="PANTHER" id="PTHR39455">
    <property type="entry name" value="CELL DIVISION PROTEIN ZAPD"/>
    <property type="match status" value="1"/>
</dbReference>
<dbReference type="PANTHER" id="PTHR39455:SF1">
    <property type="entry name" value="CELL DIVISION PROTEIN ZAPD"/>
    <property type="match status" value="1"/>
</dbReference>
<dbReference type="Pfam" id="PF07072">
    <property type="entry name" value="ZapD"/>
    <property type="match status" value="1"/>
</dbReference>
<dbReference type="SUPFAM" id="SSF160950">
    <property type="entry name" value="YacF-like"/>
    <property type="match status" value="1"/>
</dbReference>
<gene>
    <name evidence="1" type="primary">zapD</name>
    <name type="ordered locus">H16_A3259</name>
</gene>
<keyword id="KW-0131">Cell cycle</keyword>
<keyword id="KW-0132">Cell division</keyword>
<keyword id="KW-0963">Cytoplasm</keyword>
<keyword id="KW-1185">Reference proteome</keyword>
<keyword id="KW-0717">Septation</keyword>
<accession>Q0K6N8</accession>
<protein>
    <recommendedName>
        <fullName evidence="1">Cell division protein ZapD</fullName>
    </recommendedName>
    <alternativeName>
        <fullName evidence="1">Z ring-associated protein D</fullName>
    </alternativeName>
</protein>